<sequence>MSSEIPPQVQNQLAQLQQVQQQAQALAMQKNQMESMKKESEMALEELEKLSDDAIVYRAVGDLQIQSNKDDTVAKLKERLETLSLRLQSITRQEERISKRFTQLQEQLKQAMGTQGQ</sequence>
<proteinExistence type="inferred from homology"/>
<organism>
    <name type="scientific">Methanococcoides burtonii (strain DSM 6242 / NBRC 107633 / OCM 468 / ACE-M)</name>
    <dbReference type="NCBI Taxonomy" id="259564"/>
    <lineage>
        <taxon>Archaea</taxon>
        <taxon>Methanobacteriati</taxon>
        <taxon>Methanobacteriota</taxon>
        <taxon>Stenosarchaea group</taxon>
        <taxon>Methanomicrobia</taxon>
        <taxon>Methanosarcinales</taxon>
        <taxon>Methanosarcinaceae</taxon>
        <taxon>Methanococcoides</taxon>
    </lineage>
</organism>
<gene>
    <name evidence="1" type="primary">pfdB</name>
    <name type="ordered locus">Mbur_0205</name>
</gene>
<accession>Q12ZB1</accession>
<evidence type="ECO:0000255" key="1">
    <source>
        <dbReference type="HAMAP-Rule" id="MF_00307"/>
    </source>
</evidence>
<feature type="chain" id="PRO_0000300773" description="Prefoldin subunit beta">
    <location>
        <begin position="1"/>
        <end position="117"/>
    </location>
</feature>
<keyword id="KW-0143">Chaperone</keyword>
<keyword id="KW-0963">Cytoplasm</keyword>
<protein>
    <recommendedName>
        <fullName evidence="1">Prefoldin subunit beta</fullName>
    </recommendedName>
    <alternativeName>
        <fullName evidence="1">GimC subunit beta</fullName>
    </alternativeName>
</protein>
<dbReference type="EMBL" id="CP000300">
    <property type="protein sequence ID" value="ABE51215.1"/>
    <property type="molecule type" value="Genomic_DNA"/>
</dbReference>
<dbReference type="RefSeq" id="WP_011498377.1">
    <property type="nucleotide sequence ID" value="NC_007955.1"/>
</dbReference>
<dbReference type="SMR" id="Q12ZB1"/>
<dbReference type="STRING" id="259564.Mbur_0205"/>
<dbReference type="GeneID" id="3997172"/>
<dbReference type="KEGG" id="mbu:Mbur_0205"/>
<dbReference type="HOGENOM" id="CLU_131909_2_1_2"/>
<dbReference type="OrthoDB" id="204796at2157"/>
<dbReference type="Proteomes" id="UP000001979">
    <property type="component" value="Chromosome"/>
</dbReference>
<dbReference type="GO" id="GO:0005737">
    <property type="term" value="C:cytoplasm"/>
    <property type="evidence" value="ECO:0007669"/>
    <property type="project" value="UniProtKB-SubCell"/>
</dbReference>
<dbReference type="GO" id="GO:0016272">
    <property type="term" value="C:prefoldin complex"/>
    <property type="evidence" value="ECO:0007669"/>
    <property type="project" value="UniProtKB-UniRule"/>
</dbReference>
<dbReference type="GO" id="GO:0051087">
    <property type="term" value="F:protein-folding chaperone binding"/>
    <property type="evidence" value="ECO:0007669"/>
    <property type="project" value="TreeGrafter"/>
</dbReference>
<dbReference type="GO" id="GO:0051082">
    <property type="term" value="F:unfolded protein binding"/>
    <property type="evidence" value="ECO:0007669"/>
    <property type="project" value="UniProtKB-UniRule"/>
</dbReference>
<dbReference type="GO" id="GO:0051131">
    <property type="term" value="P:chaperone-mediated protein complex assembly"/>
    <property type="evidence" value="ECO:0007669"/>
    <property type="project" value="TreeGrafter"/>
</dbReference>
<dbReference type="GO" id="GO:0006457">
    <property type="term" value="P:protein folding"/>
    <property type="evidence" value="ECO:0007669"/>
    <property type="project" value="UniProtKB-UniRule"/>
</dbReference>
<dbReference type="CDD" id="cd23162">
    <property type="entry name" value="Prefoldin_beta_GimC"/>
    <property type="match status" value="1"/>
</dbReference>
<dbReference type="Gene3D" id="1.10.287.370">
    <property type="match status" value="1"/>
</dbReference>
<dbReference type="HAMAP" id="MF_00307">
    <property type="entry name" value="PfdB"/>
    <property type="match status" value="1"/>
</dbReference>
<dbReference type="InterPro" id="IPR002777">
    <property type="entry name" value="PFD_beta-like"/>
</dbReference>
<dbReference type="InterPro" id="IPR012713">
    <property type="entry name" value="PfdB"/>
</dbReference>
<dbReference type="InterPro" id="IPR009053">
    <property type="entry name" value="Prefoldin"/>
</dbReference>
<dbReference type="NCBIfam" id="TIGR02338">
    <property type="entry name" value="gimC_beta"/>
    <property type="match status" value="1"/>
</dbReference>
<dbReference type="PANTHER" id="PTHR21431">
    <property type="entry name" value="PREFOLDIN SUBUNIT 6"/>
    <property type="match status" value="1"/>
</dbReference>
<dbReference type="PANTHER" id="PTHR21431:SF0">
    <property type="entry name" value="PREFOLDIN SUBUNIT 6"/>
    <property type="match status" value="1"/>
</dbReference>
<dbReference type="Pfam" id="PF01920">
    <property type="entry name" value="Prefoldin_2"/>
    <property type="match status" value="1"/>
</dbReference>
<dbReference type="SUPFAM" id="SSF46579">
    <property type="entry name" value="Prefoldin"/>
    <property type="match status" value="1"/>
</dbReference>
<comment type="function">
    <text evidence="1">Molecular chaperone capable of stabilizing a range of proteins. Seems to fulfill an ATP-independent, HSP70-like function in archaeal de novo protein folding.</text>
</comment>
<comment type="subunit">
    <text evidence="1">Heterohexamer of two alpha and four beta subunits.</text>
</comment>
<comment type="subcellular location">
    <subcellularLocation>
        <location evidence="1">Cytoplasm</location>
    </subcellularLocation>
</comment>
<comment type="similarity">
    <text evidence="1">Belongs to the prefoldin subunit beta family.</text>
</comment>
<reference key="1">
    <citation type="journal article" date="2009" name="ISME J.">
        <title>The genome sequence of the psychrophilic archaeon, Methanococcoides burtonii: the role of genome evolution in cold adaptation.</title>
        <authorList>
            <person name="Allen M.A."/>
            <person name="Lauro F.M."/>
            <person name="Williams T.J."/>
            <person name="Burg D."/>
            <person name="Siddiqui K.S."/>
            <person name="De Francisci D."/>
            <person name="Chong K.W."/>
            <person name="Pilak O."/>
            <person name="Chew H.H."/>
            <person name="De Maere M.Z."/>
            <person name="Ting L."/>
            <person name="Katrib M."/>
            <person name="Ng C."/>
            <person name="Sowers K.R."/>
            <person name="Galperin M.Y."/>
            <person name="Anderson I.J."/>
            <person name="Ivanova N."/>
            <person name="Dalin E."/>
            <person name="Martinez M."/>
            <person name="Lapidus A."/>
            <person name="Hauser L."/>
            <person name="Land M."/>
            <person name="Thomas T."/>
            <person name="Cavicchioli R."/>
        </authorList>
    </citation>
    <scope>NUCLEOTIDE SEQUENCE [LARGE SCALE GENOMIC DNA]</scope>
    <source>
        <strain>DSM 6242 / NBRC 107633 / OCM 468 / ACE-M</strain>
    </source>
</reference>
<name>PFDB_METBU</name>